<keyword id="KW-0963">Cytoplasm</keyword>
<keyword id="KW-0396">Initiation factor</keyword>
<keyword id="KW-0648">Protein biosynthesis</keyword>
<dbReference type="EMBL" id="BX897699">
    <property type="protein sequence ID" value="CAF26865.1"/>
    <property type="molecule type" value="Genomic_DNA"/>
</dbReference>
<dbReference type="RefSeq" id="WP_011180012.1">
    <property type="nucleotide sequence ID" value="NZ_LRIJ02000001.1"/>
</dbReference>
<dbReference type="SMR" id="Q6G570"/>
<dbReference type="PaxDb" id="283166-BH00490"/>
<dbReference type="EnsemblBacteria" id="CAF26865">
    <property type="protein sequence ID" value="CAF26865"/>
    <property type="gene ID" value="BH00490"/>
</dbReference>
<dbReference type="GeneID" id="92986336"/>
<dbReference type="KEGG" id="bhe:BH00490"/>
<dbReference type="eggNOG" id="COG0290">
    <property type="taxonomic scope" value="Bacteria"/>
</dbReference>
<dbReference type="OrthoDB" id="9806014at2"/>
<dbReference type="Proteomes" id="UP000000421">
    <property type="component" value="Chromosome"/>
</dbReference>
<dbReference type="GO" id="GO:0005829">
    <property type="term" value="C:cytosol"/>
    <property type="evidence" value="ECO:0007669"/>
    <property type="project" value="TreeGrafter"/>
</dbReference>
<dbReference type="GO" id="GO:0016020">
    <property type="term" value="C:membrane"/>
    <property type="evidence" value="ECO:0007669"/>
    <property type="project" value="TreeGrafter"/>
</dbReference>
<dbReference type="GO" id="GO:0043022">
    <property type="term" value="F:ribosome binding"/>
    <property type="evidence" value="ECO:0007669"/>
    <property type="project" value="TreeGrafter"/>
</dbReference>
<dbReference type="GO" id="GO:0003743">
    <property type="term" value="F:translation initiation factor activity"/>
    <property type="evidence" value="ECO:0007669"/>
    <property type="project" value="UniProtKB-UniRule"/>
</dbReference>
<dbReference type="GO" id="GO:0032790">
    <property type="term" value="P:ribosome disassembly"/>
    <property type="evidence" value="ECO:0007669"/>
    <property type="project" value="TreeGrafter"/>
</dbReference>
<dbReference type="FunFam" id="3.30.110.10:FF:000001">
    <property type="entry name" value="Translation initiation factor IF-3"/>
    <property type="match status" value="1"/>
</dbReference>
<dbReference type="Gene3D" id="3.30.110.10">
    <property type="entry name" value="Translation initiation factor 3 (IF-3), C-terminal domain"/>
    <property type="match status" value="1"/>
</dbReference>
<dbReference type="Gene3D" id="3.10.20.80">
    <property type="entry name" value="Translation initiation factor 3 (IF-3), N-terminal domain"/>
    <property type="match status" value="1"/>
</dbReference>
<dbReference type="HAMAP" id="MF_00080">
    <property type="entry name" value="IF_3"/>
    <property type="match status" value="1"/>
</dbReference>
<dbReference type="InterPro" id="IPR036788">
    <property type="entry name" value="T_IF-3_C_sf"/>
</dbReference>
<dbReference type="InterPro" id="IPR036787">
    <property type="entry name" value="T_IF-3_N_sf"/>
</dbReference>
<dbReference type="InterPro" id="IPR001288">
    <property type="entry name" value="Translation_initiation_fac_3"/>
</dbReference>
<dbReference type="InterPro" id="IPR019815">
    <property type="entry name" value="Translation_initiation_fac_3_C"/>
</dbReference>
<dbReference type="InterPro" id="IPR019814">
    <property type="entry name" value="Translation_initiation_fac_3_N"/>
</dbReference>
<dbReference type="NCBIfam" id="TIGR00168">
    <property type="entry name" value="infC"/>
    <property type="match status" value="1"/>
</dbReference>
<dbReference type="PANTHER" id="PTHR10938">
    <property type="entry name" value="TRANSLATION INITIATION FACTOR IF-3"/>
    <property type="match status" value="1"/>
</dbReference>
<dbReference type="PANTHER" id="PTHR10938:SF0">
    <property type="entry name" value="TRANSLATION INITIATION FACTOR IF-3, MITOCHONDRIAL"/>
    <property type="match status" value="1"/>
</dbReference>
<dbReference type="Pfam" id="PF00707">
    <property type="entry name" value="IF3_C"/>
    <property type="match status" value="1"/>
</dbReference>
<dbReference type="Pfam" id="PF05198">
    <property type="entry name" value="IF3_N"/>
    <property type="match status" value="1"/>
</dbReference>
<dbReference type="SUPFAM" id="SSF55200">
    <property type="entry name" value="Translation initiation factor IF3, C-terminal domain"/>
    <property type="match status" value="1"/>
</dbReference>
<dbReference type="SUPFAM" id="SSF54364">
    <property type="entry name" value="Translation initiation factor IF3, N-terminal domain"/>
    <property type="match status" value="1"/>
</dbReference>
<evidence type="ECO:0000255" key="1">
    <source>
        <dbReference type="HAMAP-Rule" id="MF_00080"/>
    </source>
</evidence>
<comment type="function">
    <text evidence="1">IF-3 binds to the 30S ribosomal subunit and shifts the equilibrium between 70S ribosomes and their 50S and 30S subunits in favor of the free subunits, thus enhancing the availability of 30S subunits on which protein synthesis initiation begins.</text>
</comment>
<comment type="subunit">
    <text evidence="1">Monomer.</text>
</comment>
<comment type="subcellular location">
    <subcellularLocation>
        <location evidence="1">Cytoplasm</location>
    </subcellularLocation>
</comment>
<comment type="similarity">
    <text evidence="1">Belongs to the IF-3 family.</text>
</comment>
<name>IF3_BARHE</name>
<proteinExistence type="inferred from homology"/>
<gene>
    <name evidence="1" type="primary">infC</name>
    <name type="ordered locus">BH00490</name>
</gene>
<feature type="chain" id="PRO_0000177484" description="Translation initiation factor IF-3">
    <location>
        <begin position="1"/>
        <end position="172"/>
    </location>
</feature>
<reference key="1">
    <citation type="journal article" date="2004" name="Proc. Natl. Acad. Sci. U.S.A.">
        <title>The louse-borne human pathogen Bartonella quintana is a genomic derivative of the zoonotic agent Bartonella henselae.</title>
        <authorList>
            <person name="Alsmark U.C.M."/>
            <person name="Frank A.C."/>
            <person name="Karlberg E.O."/>
            <person name="Legault B.-A."/>
            <person name="Ardell D.H."/>
            <person name="Canbaeck B."/>
            <person name="Eriksson A.-S."/>
            <person name="Naeslund A.K."/>
            <person name="Handley S.A."/>
            <person name="Huvet M."/>
            <person name="La Scola B."/>
            <person name="Holmberg M."/>
            <person name="Andersson S.G.E."/>
        </authorList>
    </citation>
    <scope>NUCLEOTIDE SEQUENCE [LARGE SCALE GENOMIC DNA]</scope>
    <source>
        <strain>ATCC 49882 / DSM 28221 / CCUG 30454 / Houston 1</strain>
    </source>
</reference>
<accession>Q6G570</accession>
<protein>
    <recommendedName>
        <fullName evidence="1">Translation initiation factor IF-3</fullName>
    </recommendedName>
</protein>
<organism>
    <name type="scientific">Bartonella henselae (strain ATCC 49882 / DSM 28221 / CCUG 30454 / Houston 1)</name>
    <name type="common">Rochalimaea henselae</name>
    <dbReference type="NCBI Taxonomy" id="283166"/>
    <lineage>
        <taxon>Bacteria</taxon>
        <taxon>Pseudomonadati</taxon>
        <taxon>Pseudomonadota</taxon>
        <taxon>Alphaproteobacteria</taxon>
        <taxon>Hyphomicrobiales</taxon>
        <taxon>Bartonellaceae</taxon>
        <taxon>Bartonella</taxon>
    </lineage>
</organism>
<sequence>MTHTPKDGPRANQDIRVPRVQLINDEGQHQGVVTIQEALAMAAEVGLDLVEIVPNAEPPVCKIIDLGKLKYQTQKKAAETRKKQKVIEIKEIKMRPNVDVHDYGVKLKAIHRFIGNGDKVKITLRFRGREMAHQDLGLKLLQRVKEDTSEIAKIESEPKLEGRQMMMVIAAK</sequence>